<protein>
    <recommendedName>
        <fullName evidence="1">Ferredoxin--NADP reductase 2</fullName>
        <shortName evidence="1">FNR 2</shortName>
        <shortName evidence="1">Fd-NADP(+) reductase 2</shortName>
        <ecNumber evidence="1">1.18.1.2</ecNumber>
    </recommendedName>
</protein>
<gene>
    <name type="ordered locus">Saci_2144</name>
</gene>
<sequence>MKEYDIIIVGGGPIGLFATFYSGLRDMSALLIDAQDELGGQLVTIYPEKMVYDVGGYPGILAYDLAQNLIEQAKMFSPDIRLKEWVDWITRTQDNLWVIKTDKGNEFKAKTILLALGIGRITPSRLGAGGEIEYENRGVYYTVKRKKDFEEKRILIVGGGDSAVDWAINLAPVAKSITLIHRRDQFRAHESSVKQLYNIASVHTWHELKEVKGDGSKVTQAVIFDNRTKEEKTLDVDAVIISIGHKGDLGNVPRWGLNMKGRDILVNAKMETNLPGVYAAGDIASQEGVPKMALIAIGFSEAAIATSMAKKYIDPNVSIFGGHSSEIMKSRS</sequence>
<name>FENR2_SULAC</name>
<reference key="1">
    <citation type="journal article" date="2005" name="J. Bacteriol.">
        <title>The genome of Sulfolobus acidocaldarius, a model organism of the Crenarchaeota.</title>
        <authorList>
            <person name="Chen L."/>
            <person name="Bruegger K."/>
            <person name="Skovgaard M."/>
            <person name="Redder P."/>
            <person name="She Q."/>
            <person name="Torarinsson E."/>
            <person name="Greve B."/>
            <person name="Awayez M."/>
            <person name="Zibat A."/>
            <person name="Klenk H.-P."/>
            <person name="Garrett R.A."/>
        </authorList>
    </citation>
    <scope>NUCLEOTIDE SEQUENCE [LARGE SCALE GENOMIC DNA]</scope>
    <source>
        <strain>ATCC 33909 / DSM 639 / JCM 8929 / NBRC 15157 / NCIMB 11770</strain>
    </source>
</reference>
<keyword id="KW-0274">FAD</keyword>
<keyword id="KW-0285">Flavoprotein</keyword>
<keyword id="KW-0521">NADP</keyword>
<keyword id="KW-0560">Oxidoreductase</keyword>
<keyword id="KW-1185">Reference proteome</keyword>
<accession>Q4J6Z4</accession>
<evidence type="ECO:0000255" key="1">
    <source>
        <dbReference type="HAMAP-Rule" id="MF_01685"/>
    </source>
</evidence>
<dbReference type="EC" id="1.18.1.2" evidence="1"/>
<dbReference type="EMBL" id="CP000077">
    <property type="protein sequence ID" value="AAY81437.1"/>
    <property type="molecule type" value="Genomic_DNA"/>
</dbReference>
<dbReference type="RefSeq" id="WP_011278939.1">
    <property type="nucleotide sequence ID" value="NC_007181.1"/>
</dbReference>
<dbReference type="SMR" id="Q4J6Z4"/>
<dbReference type="STRING" id="330779.Saci_2144"/>
<dbReference type="GeneID" id="14552661"/>
<dbReference type="KEGG" id="sai:Saci_2144"/>
<dbReference type="PATRIC" id="fig|330779.12.peg.2149"/>
<dbReference type="eggNOG" id="arCOG01296">
    <property type="taxonomic scope" value="Archaea"/>
</dbReference>
<dbReference type="HOGENOM" id="CLU_031864_5_5_2"/>
<dbReference type="Proteomes" id="UP000001018">
    <property type="component" value="Chromosome"/>
</dbReference>
<dbReference type="GO" id="GO:0004324">
    <property type="term" value="F:ferredoxin-NADP+ reductase activity"/>
    <property type="evidence" value="ECO:0007669"/>
    <property type="project" value="UniProtKB-UniRule"/>
</dbReference>
<dbReference type="GO" id="GO:0050660">
    <property type="term" value="F:flavin adenine dinucleotide binding"/>
    <property type="evidence" value="ECO:0007669"/>
    <property type="project" value="UniProtKB-UniRule"/>
</dbReference>
<dbReference type="GO" id="GO:0050661">
    <property type="term" value="F:NADP binding"/>
    <property type="evidence" value="ECO:0007669"/>
    <property type="project" value="UniProtKB-UniRule"/>
</dbReference>
<dbReference type="Gene3D" id="3.50.50.60">
    <property type="entry name" value="FAD/NAD(P)-binding domain"/>
    <property type="match status" value="2"/>
</dbReference>
<dbReference type="HAMAP" id="MF_01685">
    <property type="entry name" value="FENR2"/>
    <property type="match status" value="1"/>
</dbReference>
<dbReference type="InterPro" id="IPR036188">
    <property type="entry name" value="FAD/NAD-bd_sf"/>
</dbReference>
<dbReference type="InterPro" id="IPR023753">
    <property type="entry name" value="FAD/NAD-binding_dom"/>
</dbReference>
<dbReference type="InterPro" id="IPR022890">
    <property type="entry name" value="Fd--NADP_Rdtase_type_2"/>
</dbReference>
<dbReference type="InterPro" id="IPR050097">
    <property type="entry name" value="Ferredoxin-NADP_redctase_2"/>
</dbReference>
<dbReference type="PANTHER" id="PTHR48105">
    <property type="entry name" value="THIOREDOXIN REDUCTASE 1-RELATED-RELATED"/>
    <property type="match status" value="1"/>
</dbReference>
<dbReference type="Pfam" id="PF07992">
    <property type="entry name" value="Pyr_redox_2"/>
    <property type="match status" value="1"/>
</dbReference>
<dbReference type="PRINTS" id="PR00368">
    <property type="entry name" value="FADPNR"/>
</dbReference>
<dbReference type="PRINTS" id="PR00469">
    <property type="entry name" value="PNDRDTASEII"/>
</dbReference>
<dbReference type="SUPFAM" id="SSF51905">
    <property type="entry name" value="FAD/NAD(P)-binding domain"/>
    <property type="match status" value="1"/>
</dbReference>
<comment type="catalytic activity">
    <reaction evidence="1">
        <text>2 reduced [2Fe-2S]-[ferredoxin] + NADP(+) + H(+) = 2 oxidized [2Fe-2S]-[ferredoxin] + NADPH</text>
        <dbReference type="Rhea" id="RHEA:20125"/>
        <dbReference type="Rhea" id="RHEA-COMP:10000"/>
        <dbReference type="Rhea" id="RHEA-COMP:10001"/>
        <dbReference type="ChEBI" id="CHEBI:15378"/>
        <dbReference type="ChEBI" id="CHEBI:33737"/>
        <dbReference type="ChEBI" id="CHEBI:33738"/>
        <dbReference type="ChEBI" id="CHEBI:57783"/>
        <dbReference type="ChEBI" id="CHEBI:58349"/>
        <dbReference type="EC" id="1.18.1.2"/>
    </reaction>
</comment>
<comment type="cofactor">
    <cofactor evidence="1">
        <name>FAD</name>
        <dbReference type="ChEBI" id="CHEBI:57692"/>
    </cofactor>
    <text evidence="1">Binds 1 FAD per subunit.</text>
</comment>
<comment type="subunit">
    <text evidence="1">Homodimer.</text>
</comment>
<comment type="similarity">
    <text evidence="1">Belongs to the ferredoxin--NADP reductase type 2 family.</text>
</comment>
<proteinExistence type="inferred from homology"/>
<organism>
    <name type="scientific">Sulfolobus acidocaldarius (strain ATCC 33909 / DSM 639 / JCM 8929 / NBRC 15157 / NCIMB 11770)</name>
    <dbReference type="NCBI Taxonomy" id="330779"/>
    <lineage>
        <taxon>Archaea</taxon>
        <taxon>Thermoproteota</taxon>
        <taxon>Thermoprotei</taxon>
        <taxon>Sulfolobales</taxon>
        <taxon>Sulfolobaceae</taxon>
        <taxon>Sulfolobus</taxon>
    </lineage>
</organism>
<feature type="chain" id="PRO_0000364990" description="Ferredoxin--NADP reductase 2">
    <location>
        <begin position="1"/>
        <end position="332"/>
    </location>
</feature>
<feature type="binding site" evidence="1">
    <location>
        <position position="33"/>
    </location>
    <ligand>
        <name>FAD</name>
        <dbReference type="ChEBI" id="CHEBI:57692"/>
    </ligand>
</feature>
<feature type="binding site" evidence="1">
    <location>
        <position position="41"/>
    </location>
    <ligand>
        <name>FAD</name>
        <dbReference type="ChEBI" id="CHEBI:57692"/>
    </ligand>
</feature>
<feature type="binding site" evidence="1">
    <location>
        <position position="46"/>
    </location>
    <ligand>
        <name>FAD</name>
        <dbReference type="ChEBI" id="CHEBI:57692"/>
    </ligand>
</feature>
<feature type="binding site" evidence="1">
    <location>
        <position position="86"/>
    </location>
    <ligand>
        <name>FAD</name>
        <dbReference type="ChEBI" id="CHEBI:57692"/>
    </ligand>
</feature>
<feature type="binding site" evidence="1">
    <location>
        <position position="121"/>
    </location>
    <ligand>
        <name>FAD</name>
        <dbReference type="ChEBI" id="CHEBI:57692"/>
    </ligand>
</feature>
<feature type="binding site" evidence="1">
    <location>
        <position position="282"/>
    </location>
    <ligand>
        <name>FAD</name>
        <dbReference type="ChEBI" id="CHEBI:57692"/>
    </ligand>
</feature>
<feature type="binding site" evidence="1">
    <location>
        <position position="325"/>
    </location>
    <ligand>
        <name>FAD</name>
        <dbReference type="ChEBI" id="CHEBI:57692"/>
    </ligand>
</feature>